<feature type="chain" id="PRO_0000323641" description="DNA-directed RNA polymerase subunit alpha">
    <location>
        <begin position="1"/>
        <end position="328"/>
    </location>
</feature>
<feature type="region of interest" description="Alpha N-terminal domain (alpha-NTD)" evidence="1">
    <location>
        <begin position="1"/>
        <end position="230"/>
    </location>
</feature>
<feature type="region of interest" description="Alpha C-terminal domain (alpha-CTD)" evidence="1">
    <location>
        <begin position="243"/>
        <end position="328"/>
    </location>
</feature>
<reference key="1">
    <citation type="journal article" date="2007" name="Proc. Natl. Acad. Sci. U.S.A.">
        <title>Deep-sea vent epsilon-proteobacterial genomes provide insights into emergence of pathogens.</title>
        <authorList>
            <person name="Nakagawa S."/>
            <person name="Takaki Y."/>
            <person name="Shimamura S."/>
            <person name="Reysenbach A.-L."/>
            <person name="Takai K."/>
            <person name="Horikoshi K."/>
        </authorList>
    </citation>
    <scope>NUCLEOTIDE SEQUENCE [LARGE SCALE GENOMIC DNA]</scope>
    <source>
        <strain>SB155-2</strain>
    </source>
</reference>
<protein>
    <recommendedName>
        <fullName evidence="1">DNA-directed RNA polymerase subunit alpha</fullName>
        <shortName evidence="1">RNAP subunit alpha</shortName>
        <ecNumber evidence="1">2.7.7.6</ecNumber>
    </recommendedName>
    <alternativeName>
        <fullName evidence="1">RNA polymerase subunit alpha</fullName>
    </alternativeName>
    <alternativeName>
        <fullName evidence="1">Transcriptase subunit alpha</fullName>
    </alternativeName>
</protein>
<sequence>MNKIKITPSVPTHMEVEKIKENAIRLHVYPYESGYAISVAHPLRRLLLSSTAGYAPIGLKIEGVQHEFDSVRGMLEDVAAFIINLKNVRFKLRDSEQENVTLEYEFSGPKELFGKDFENDLVEVVTPDAFLATLNEDAELKMSIIVQKGIGYVPSEMIRDLLPQGYIPLDAFFTPVKKAVYEIEKVLVEDNPNYEKIVFDIETDGQVDPVSALKMAMNVMQSQMEIFTNDIEVTETVGQNIENSEIFYQPLDILDLSARSYNCLDKAGIKYVGELLLMSNEALKSIKNLGKKSLDEIQEKLSELNIDLGKLSDQEKETILKKIEQNKS</sequence>
<comment type="function">
    <text evidence="1">DNA-dependent RNA polymerase catalyzes the transcription of DNA into RNA using the four ribonucleoside triphosphates as substrates.</text>
</comment>
<comment type="catalytic activity">
    <reaction evidence="1">
        <text>RNA(n) + a ribonucleoside 5'-triphosphate = RNA(n+1) + diphosphate</text>
        <dbReference type="Rhea" id="RHEA:21248"/>
        <dbReference type="Rhea" id="RHEA-COMP:14527"/>
        <dbReference type="Rhea" id="RHEA-COMP:17342"/>
        <dbReference type="ChEBI" id="CHEBI:33019"/>
        <dbReference type="ChEBI" id="CHEBI:61557"/>
        <dbReference type="ChEBI" id="CHEBI:140395"/>
        <dbReference type="EC" id="2.7.7.6"/>
    </reaction>
</comment>
<comment type="subunit">
    <text evidence="1">Homodimer. The RNAP catalytic core consists of 2 alpha, 1 beta, 1 beta' and 1 omega subunit. When a sigma factor is associated with the core the holoenzyme is formed, which can initiate transcription.</text>
</comment>
<comment type="domain">
    <text evidence="1">The N-terminal domain is essential for RNAP assembly and basal transcription, whereas the C-terminal domain is involved in interaction with transcriptional regulators and with upstream promoter elements.</text>
</comment>
<comment type="similarity">
    <text evidence="1">Belongs to the RNA polymerase alpha chain family.</text>
</comment>
<keyword id="KW-0240">DNA-directed RNA polymerase</keyword>
<keyword id="KW-0548">Nucleotidyltransferase</keyword>
<keyword id="KW-1185">Reference proteome</keyword>
<keyword id="KW-0804">Transcription</keyword>
<keyword id="KW-0808">Transferase</keyword>
<accession>A6Q1K4</accession>
<dbReference type="EC" id="2.7.7.6" evidence="1"/>
<dbReference type="EMBL" id="AP009178">
    <property type="protein sequence ID" value="BAF69363.1"/>
    <property type="molecule type" value="Genomic_DNA"/>
</dbReference>
<dbReference type="RefSeq" id="WP_012081626.1">
    <property type="nucleotide sequence ID" value="NC_009662.1"/>
</dbReference>
<dbReference type="SMR" id="A6Q1K4"/>
<dbReference type="FunCoup" id="A6Q1K4">
    <property type="interactions" value="431"/>
</dbReference>
<dbReference type="STRING" id="387092.NIS_0249"/>
<dbReference type="KEGG" id="nis:NIS_0249"/>
<dbReference type="eggNOG" id="COG0202">
    <property type="taxonomic scope" value="Bacteria"/>
</dbReference>
<dbReference type="HOGENOM" id="CLU_053084_0_1_7"/>
<dbReference type="InParanoid" id="A6Q1K4"/>
<dbReference type="OrthoDB" id="9805706at2"/>
<dbReference type="Proteomes" id="UP000001118">
    <property type="component" value="Chromosome"/>
</dbReference>
<dbReference type="GO" id="GO:0005737">
    <property type="term" value="C:cytoplasm"/>
    <property type="evidence" value="ECO:0007669"/>
    <property type="project" value="UniProtKB-ARBA"/>
</dbReference>
<dbReference type="GO" id="GO:0000428">
    <property type="term" value="C:DNA-directed RNA polymerase complex"/>
    <property type="evidence" value="ECO:0007669"/>
    <property type="project" value="UniProtKB-KW"/>
</dbReference>
<dbReference type="GO" id="GO:0003677">
    <property type="term" value="F:DNA binding"/>
    <property type="evidence" value="ECO:0007669"/>
    <property type="project" value="UniProtKB-UniRule"/>
</dbReference>
<dbReference type="GO" id="GO:0003899">
    <property type="term" value="F:DNA-directed RNA polymerase activity"/>
    <property type="evidence" value="ECO:0007669"/>
    <property type="project" value="UniProtKB-UniRule"/>
</dbReference>
<dbReference type="GO" id="GO:0046983">
    <property type="term" value="F:protein dimerization activity"/>
    <property type="evidence" value="ECO:0007669"/>
    <property type="project" value="InterPro"/>
</dbReference>
<dbReference type="GO" id="GO:0006351">
    <property type="term" value="P:DNA-templated transcription"/>
    <property type="evidence" value="ECO:0007669"/>
    <property type="project" value="UniProtKB-UniRule"/>
</dbReference>
<dbReference type="CDD" id="cd06928">
    <property type="entry name" value="RNAP_alpha_NTD"/>
    <property type="match status" value="1"/>
</dbReference>
<dbReference type="Gene3D" id="1.10.150.20">
    <property type="entry name" value="5' to 3' exonuclease, C-terminal subdomain"/>
    <property type="match status" value="1"/>
</dbReference>
<dbReference type="Gene3D" id="2.170.120.12">
    <property type="entry name" value="DNA-directed RNA polymerase, insert domain"/>
    <property type="match status" value="1"/>
</dbReference>
<dbReference type="Gene3D" id="3.30.1360.10">
    <property type="entry name" value="RNA polymerase, RBP11-like subunit"/>
    <property type="match status" value="1"/>
</dbReference>
<dbReference type="HAMAP" id="MF_00059">
    <property type="entry name" value="RNApol_bact_RpoA"/>
    <property type="match status" value="1"/>
</dbReference>
<dbReference type="InterPro" id="IPR011262">
    <property type="entry name" value="DNA-dir_RNA_pol_insert"/>
</dbReference>
<dbReference type="InterPro" id="IPR011263">
    <property type="entry name" value="DNA-dir_RNA_pol_RpoA/D/Rpb3"/>
</dbReference>
<dbReference type="InterPro" id="IPR011773">
    <property type="entry name" value="DNA-dir_RpoA"/>
</dbReference>
<dbReference type="InterPro" id="IPR036603">
    <property type="entry name" value="RBP11-like"/>
</dbReference>
<dbReference type="InterPro" id="IPR011260">
    <property type="entry name" value="RNAP_asu_C"/>
</dbReference>
<dbReference type="InterPro" id="IPR036643">
    <property type="entry name" value="RNApol_insert_sf"/>
</dbReference>
<dbReference type="NCBIfam" id="NF003517">
    <property type="entry name" value="PRK05182.2-3"/>
    <property type="match status" value="1"/>
</dbReference>
<dbReference type="NCBIfam" id="NF003519">
    <property type="entry name" value="PRK05182.2-5"/>
    <property type="match status" value="1"/>
</dbReference>
<dbReference type="NCBIfam" id="TIGR02027">
    <property type="entry name" value="rpoA"/>
    <property type="match status" value="1"/>
</dbReference>
<dbReference type="Pfam" id="PF01000">
    <property type="entry name" value="RNA_pol_A_bac"/>
    <property type="match status" value="1"/>
</dbReference>
<dbReference type="Pfam" id="PF03118">
    <property type="entry name" value="RNA_pol_A_CTD"/>
    <property type="match status" value="1"/>
</dbReference>
<dbReference type="Pfam" id="PF01193">
    <property type="entry name" value="RNA_pol_L"/>
    <property type="match status" value="1"/>
</dbReference>
<dbReference type="SMART" id="SM00662">
    <property type="entry name" value="RPOLD"/>
    <property type="match status" value="1"/>
</dbReference>
<dbReference type="SUPFAM" id="SSF47789">
    <property type="entry name" value="C-terminal domain of RNA polymerase alpha subunit"/>
    <property type="match status" value="1"/>
</dbReference>
<dbReference type="SUPFAM" id="SSF56553">
    <property type="entry name" value="Insert subdomain of RNA polymerase alpha subunit"/>
    <property type="match status" value="1"/>
</dbReference>
<dbReference type="SUPFAM" id="SSF55257">
    <property type="entry name" value="RBP11-like subunits of RNA polymerase"/>
    <property type="match status" value="1"/>
</dbReference>
<gene>
    <name evidence="1" type="primary">rpoA</name>
    <name type="ordered locus">NIS_0249</name>
</gene>
<evidence type="ECO:0000255" key="1">
    <source>
        <dbReference type="HAMAP-Rule" id="MF_00059"/>
    </source>
</evidence>
<organism>
    <name type="scientific">Nitratiruptor sp. (strain SB155-2)</name>
    <dbReference type="NCBI Taxonomy" id="387092"/>
    <lineage>
        <taxon>Bacteria</taxon>
        <taxon>Pseudomonadati</taxon>
        <taxon>Campylobacterota</taxon>
        <taxon>Epsilonproteobacteria</taxon>
        <taxon>Nautiliales</taxon>
        <taxon>Nitratiruptoraceae</taxon>
        <taxon>Nitratiruptor</taxon>
    </lineage>
</organism>
<name>RPOA_NITSB</name>
<proteinExistence type="inferred from homology"/>